<reference key="1">
    <citation type="journal article" date="1999" name="Biochim. Biophys. Acta">
        <title>Manganese-containing superoxide dismutase and its gene from Candida albicans.</title>
        <authorList>
            <person name="Rhie G.E."/>
            <person name="Hwang C.S."/>
            <person name="Brady M.J."/>
            <person name="Kim S.T."/>
            <person name="Kim Y.R."/>
            <person name="Huh W.K."/>
            <person name="Baek Y.U."/>
            <person name="Lee B.H."/>
            <person name="Lee J.S."/>
            <person name="Kang S.O."/>
        </authorList>
    </citation>
    <scope>NUCLEOTIDE SEQUENCE [GENOMIC DNA]</scope>
    <scope>PARTIAL PROTEIN SEQUENCE</scope>
    <scope>CHARACTERIZATION</scope>
</reference>
<keyword id="KW-0049">Antioxidant</keyword>
<keyword id="KW-0903">Direct protein sequencing</keyword>
<keyword id="KW-0464">Manganese</keyword>
<keyword id="KW-0479">Metal-binding</keyword>
<keyword id="KW-0496">Mitochondrion</keyword>
<keyword id="KW-0560">Oxidoreductase</keyword>
<keyword id="KW-0809">Transit peptide</keyword>
<protein>
    <recommendedName>
        <fullName>Superoxide dismutase [Mn], mitochondrial</fullName>
        <ecNumber evidence="2">1.15.1.1</ecNumber>
    </recommendedName>
</protein>
<feature type="transit peptide" description="Mitochondrion">
    <location>
        <begin position="1"/>
        <end position="34"/>
    </location>
</feature>
<feature type="chain" id="PRO_0000032882" description="Superoxide dismutase [Mn], mitochondrial">
    <location>
        <begin position="35"/>
        <end position="234"/>
    </location>
</feature>
<feature type="binding site" evidence="1">
    <location>
        <position position="60"/>
    </location>
    <ligand>
        <name>Mn(2+)</name>
        <dbReference type="ChEBI" id="CHEBI:29035"/>
    </ligand>
</feature>
<feature type="binding site" evidence="1">
    <location>
        <position position="108"/>
    </location>
    <ligand>
        <name>Mn(2+)</name>
        <dbReference type="ChEBI" id="CHEBI:29035"/>
    </ligand>
</feature>
<feature type="binding site" evidence="1">
    <location>
        <position position="198"/>
    </location>
    <ligand>
        <name>Mn(2+)</name>
        <dbReference type="ChEBI" id="CHEBI:29035"/>
    </ligand>
</feature>
<feature type="binding site" evidence="1">
    <location>
        <position position="202"/>
    </location>
    <ligand>
        <name>Mn(2+)</name>
        <dbReference type="ChEBI" id="CHEBI:29035"/>
    </ligand>
</feature>
<dbReference type="EC" id="1.15.1.1" evidence="2"/>
<dbReference type="EMBL" id="AF031478">
    <property type="protein sequence ID" value="AAB86583.1"/>
    <property type="molecule type" value="Genomic_DNA"/>
</dbReference>
<dbReference type="SMR" id="O13401"/>
<dbReference type="Allergome" id="9599">
    <property type="allergen name" value="Cand a MnSOD"/>
</dbReference>
<dbReference type="VEuPathDB" id="FungiDB:C1_01520C_A"/>
<dbReference type="VEuPathDB" id="FungiDB:CAWG_01225"/>
<dbReference type="PHI-base" id="PHI:401"/>
<dbReference type="GO" id="GO:0005759">
    <property type="term" value="C:mitochondrial matrix"/>
    <property type="evidence" value="ECO:0007669"/>
    <property type="project" value="UniProtKB-SubCell"/>
</dbReference>
<dbReference type="GO" id="GO:0030145">
    <property type="term" value="F:manganese ion binding"/>
    <property type="evidence" value="ECO:0007669"/>
    <property type="project" value="TreeGrafter"/>
</dbReference>
<dbReference type="GO" id="GO:0004784">
    <property type="term" value="F:superoxide dismutase activity"/>
    <property type="evidence" value="ECO:0007669"/>
    <property type="project" value="UniProtKB-EC"/>
</dbReference>
<dbReference type="FunFam" id="1.10.287.990:FF:000001">
    <property type="entry name" value="Superoxide dismutase"/>
    <property type="match status" value="1"/>
</dbReference>
<dbReference type="FunFam" id="3.55.40.20:FF:000002">
    <property type="entry name" value="Superoxide dismutase"/>
    <property type="match status" value="1"/>
</dbReference>
<dbReference type="Gene3D" id="1.10.287.990">
    <property type="entry name" value="Fe,Mn superoxide dismutase (SOD) domain"/>
    <property type="match status" value="1"/>
</dbReference>
<dbReference type="Gene3D" id="3.55.40.20">
    <property type="entry name" value="Iron/manganese superoxide dismutase, C-terminal domain"/>
    <property type="match status" value="1"/>
</dbReference>
<dbReference type="InterPro" id="IPR050265">
    <property type="entry name" value="Fe/Mn_Superoxide_Dismutase"/>
</dbReference>
<dbReference type="InterPro" id="IPR001189">
    <property type="entry name" value="Mn/Fe_SOD"/>
</dbReference>
<dbReference type="InterPro" id="IPR019833">
    <property type="entry name" value="Mn/Fe_SOD_BS"/>
</dbReference>
<dbReference type="InterPro" id="IPR019832">
    <property type="entry name" value="Mn/Fe_SOD_C"/>
</dbReference>
<dbReference type="InterPro" id="IPR019831">
    <property type="entry name" value="Mn/Fe_SOD_N"/>
</dbReference>
<dbReference type="InterPro" id="IPR036324">
    <property type="entry name" value="Mn/Fe_SOD_N_sf"/>
</dbReference>
<dbReference type="InterPro" id="IPR036314">
    <property type="entry name" value="SOD_C_sf"/>
</dbReference>
<dbReference type="PANTHER" id="PTHR11404">
    <property type="entry name" value="SUPEROXIDE DISMUTASE 2"/>
    <property type="match status" value="1"/>
</dbReference>
<dbReference type="PANTHER" id="PTHR11404:SF6">
    <property type="entry name" value="SUPEROXIDE DISMUTASE [MN], MITOCHONDRIAL"/>
    <property type="match status" value="1"/>
</dbReference>
<dbReference type="Pfam" id="PF02777">
    <property type="entry name" value="Sod_Fe_C"/>
    <property type="match status" value="1"/>
</dbReference>
<dbReference type="Pfam" id="PF00081">
    <property type="entry name" value="Sod_Fe_N"/>
    <property type="match status" value="1"/>
</dbReference>
<dbReference type="PIRSF" id="PIRSF000349">
    <property type="entry name" value="SODismutase"/>
    <property type="match status" value="1"/>
</dbReference>
<dbReference type="PRINTS" id="PR01703">
    <property type="entry name" value="MNSODISMTASE"/>
</dbReference>
<dbReference type="SUPFAM" id="SSF54719">
    <property type="entry name" value="Fe,Mn superoxide dismutase (SOD), C-terminal domain"/>
    <property type="match status" value="1"/>
</dbReference>
<dbReference type="SUPFAM" id="SSF46609">
    <property type="entry name" value="Fe,Mn superoxide dismutase (SOD), N-terminal domain"/>
    <property type="match status" value="1"/>
</dbReference>
<dbReference type="PROSITE" id="PS00088">
    <property type="entry name" value="SOD_MN"/>
    <property type="match status" value="1"/>
</dbReference>
<proteinExistence type="evidence at protein level"/>
<gene>
    <name type="primary">SOD2</name>
</gene>
<sequence>MFSIRSSSRVLLKASSATTRATLNAAASKTFTRSKYSLPELDYEFSATEPYISGQINEIHYTKHHQTYVNNLNASIEQAVEAKSKGEVKKLVALEKAINFNGGGYLNHCLWWKNLAPVSQGGGQPPSEDSKLGKQIVKQFGSLDKLIEITNGKLAGIQGSGWAFIVKNKANGDTIDVITTANQDTVTDPNLVPLIAIDAWEHAYYLQYQNVKADYFKNLWHVINWKEAERRFEF</sequence>
<evidence type="ECO:0000250" key="1">
    <source>
        <dbReference type="UniProtKB" id="P04179"/>
    </source>
</evidence>
<evidence type="ECO:0000250" key="2">
    <source>
        <dbReference type="UniProtKB" id="P0A0J3"/>
    </source>
</evidence>
<evidence type="ECO:0000250" key="3">
    <source>
        <dbReference type="UniProtKB" id="Q9UQX0"/>
    </source>
</evidence>
<evidence type="ECO:0000305" key="4"/>
<comment type="function">
    <text evidence="1">Destroys superoxide anion radicals which are normally produced within the cells and which are toxic to biological systems.</text>
</comment>
<comment type="catalytic activity">
    <reaction evidence="2">
        <text>2 superoxide + 2 H(+) = H2O2 + O2</text>
        <dbReference type="Rhea" id="RHEA:20696"/>
        <dbReference type="ChEBI" id="CHEBI:15378"/>
        <dbReference type="ChEBI" id="CHEBI:15379"/>
        <dbReference type="ChEBI" id="CHEBI:16240"/>
        <dbReference type="ChEBI" id="CHEBI:18421"/>
        <dbReference type="EC" id="1.15.1.1"/>
    </reaction>
</comment>
<comment type="cofactor">
    <cofactor evidence="3">
        <name>Mn(2+)</name>
        <dbReference type="ChEBI" id="CHEBI:29035"/>
    </cofactor>
    <text evidence="3">Binds 1 Mn(2+) ion per subunit.</text>
</comment>
<comment type="subunit">
    <text evidence="1">Homotetramer.</text>
</comment>
<comment type="subcellular location">
    <subcellularLocation>
        <location evidence="3">Mitochondrion matrix</location>
    </subcellularLocation>
</comment>
<comment type="similarity">
    <text evidence="4">Belongs to the iron/manganese superoxide dismutase family.</text>
</comment>
<name>SODM_CANAX</name>
<organism>
    <name type="scientific">Candida albicans</name>
    <name type="common">Yeast</name>
    <dbReference type="NCBI Taxonomy" id="5476"/>
    <lineage>
        <taxon>Eukaryota</taxon>
        <taxon>Fungi</taxon>
        <taxon>Dikarya</taxon>
        <taxon>Ascomycota</taxon>
        <taxon>Saccharomycotina</taxon>
        <taxon>Pichiomycetes</taxon>
        <taxon>Debaryomycetaceae</taxon>
        <taxon>Candida/Lodderomyces clade</taxon>
        <taxon>Candida</taxon>
    </lineage>
</organism>
<accession>O13401</accession>